<proteinExistence type="inferred from homology"/>
<protein>
    <recommendedName>
        <fullName evidence="1">ATP-dependent protease ATPase subunit HslU</fullName>
    </recommendedName>
    <alternativeName>
        <fullName evidence="1">Unfoldase HslU</fullName>
    </alternativeName>
</protein>
<keyword id="KW-0067">ATP-binding</keyword>
<keyword id="KW-0143">Chaperone</keyword>
<keyword id="KW-0963">Cytoplasm</keyword>
<keyword id="KW-0547">Nucleotide-binding</keyword>
<keyword id="KW-1185">Reference proteome</keyword>
<keyword id="KW-0346">Stress response</keyword>
<dbReference type="EMBL" id="AM286690">
    <property type="protein sequence ID" value="CAL17693.1"/>
    <property type="molecule type" value="Genomic_DNA"/>
</dbReference>
<dbReference type="RefSeq" id="WP_011589520.1">
    <property type="nucleotide sequence ID" value="NC_008260.1"/>
</dbReference>
<dbReference type="SMR" id="Q0VMA5"/>
<dbReference type="STRING" id="393595.ABO_2245"/>
<dbReference type="KEGG" id="abo:ABO_2245"/>
<dbReference type="eggNOG" id="COG1220">
    <property type="taxonomic scope" value="Bacteria"/>
</dbReference>
<dbReference type="HOGENOM" id="CLU_033123_0_0_6"/>
<dbReference type="OrthoDB" id="9804062at2"/>
<dbReference type="Proteomes" id="UP000008871">
    <property type="component" value="Chromosome"/>
</dbReference>
<dbReference type="GO" id="GO:0009376">
    <property type="term" value="C:HslUV protease complex"/>
    <property type="evidence" value="ECO:0007669"/>
    <property type="project" value="UniProtKB-UniRule"/>
</dbReference>
<dbReference type="GO" id="GO:0005524">
    <property type="term" value="F:ATP binding"/>
    <property type="evidence" value="ECO:0007669"/>
    <property type="project" value="UniProtKB-UniRule"/>
</dbReference>
<dbReference type="GO" id="GO:0016887">
    <property type="term" value="F:ATP hydrolysis activity"/>
    <property type="evidence" value="ECO:0007669"/>
    <property type="project" value="InterPro"/>
</dbReference>
<dbReference type="GO" id="GO:0008233">
    <property type="term" value="F:peptidase activity"/>
    <property type="evidence" value="ECO:0007669"/>
    <property type="project" value="InterPro"/>
</dbReference>
<dbReference type="GO" id="GO:0036402">
    <property type="term" value="F:proteasome-activating activity"/>
    <property type="evidence" value="ECO:0007669"/>
    <property type="project" value="UniProtKB-UniRule"/>
</dbReference>
<dbReference type="GO" id="GO:0043335">
    <property type="term" value="P:protein unfolding"/>
    <property type="evidence" value="ECO:0007669"/>
    <property type="project" value="UniProtKB-UniRule"/>
</dbReference>
<dbReference type="GO" id="GO:0051603">
    <property type="term" value="P:proteolysis involved in protein catabolic process"/>
    <property type="evidence" value="ECO:0007669"/>
    <property type="project" value="TreeGrafter"/>
</dbReference>
<dbReference type="CDD" id="cd19498">
    <property type="entry name" value="RecA-like_HslU"/>
    <property type="match status" value="1"/>
</dbReference>
<dbReference type="FunFam" id="3.40.50.300:FF:000213">
    <property type="entry name" value="ATP-dependent protease ATPase subunit HslU"/>
    <property type="match status" value="1"/>
</dbReference>
<dbReference type="FunFam" id="3.40.50.300:FF:000220">
    <property type="entry name" value="ATP-dependent protease ATPase subunit HslU"/>
    <property type="match status" value="1"/>
</dbReference>
<dbReference type="Gene3D" id="1.10.8.60">
    <property type="match status" value="1"/>
</dbReference>
<dbReference type="Gene3D" id="1.10.8.10">
    <property type="entry name" value="DNA helicase RuvA subunit, C-terminal domain"/>
    <property type="match status" value="2"/>
</dbReference>
<dbReference type="Gene3D" id="3.40.50.300">
    <property type="entry name" value="P-loop containing nucleotide triphosphate hydrolases"/>
    <property type="match status" value="1"/>
</dbReference>
<dbReference type="HAMAP" id="MF_00249">
    <property type="entry name" value="HslU"/>
    <property type="match status" value="1"/>
</dbReference>
<dbReference type="InterPro" id="IPR003593">
    <property type="entry name" value="AAA+_ATPase"/>
</dbReference>
<dbReference type="InterPro" id="IPR050052">
    <property type="entry name" value="ATP-dep_Clp_protease_ClpX"/>
</dbReference>
<dbReference type="InterPro" id="IPR003959">
    <property type="entry name" value="ATPase_AAA_core"/>
</dbReference>
<dbReference type="InterPro" id="IPR019489">
    <property type="entry name" value="Clp_ATPase_C"/>
</dbReference>
<dbReference type="InterPro" id="IPR004491">
    <property type="entry name" value="HslU"/>
</dbReference>
<dbReference type="InterPro" id="IPR027417">
    <property type="entry name" value="P-loop_NTPase"/>
</dbReference>
<dbReference type="NCBIfam" id="TIGR00390">
    <property type="entry name" value="hslU"/>
    <property type="match status" value="1"/>
</dbReference>
<dbReference type="NCBIfam" id="NF003544">
    <property type="entry name" value="PRK05201.1"/>
    <property type="match status" value="1"/>
</dbReference>
<dbReference type="PANTHER" id="PTHR48102">
    <property type="entry name" value="ATP-DEPENDENT CLP PROTEASE ATP-BINDING SUBUNIT CLPX-LIKE, MITOCHONDRIAL-RELATED"/>
    <property type="match status" value="1"/>
</dbReference>
<dbReference type="PANTHER" id="PTHR48102:SF3">
    <property type="entry name" value="ATP-DEPENDENT PROTEASE ATPASE SUBUNIT HSLU"/>
    <property type="match status" value="1"/>
</dbReference>
<dbReference type="Pfam" id="PF00004">
    <property type="entry name" value="AAA"/>
    <property type="match status" value="1"/>
</dbReference>
<dbReference type="Pfam" id="PF07724">
    <property type="entry name" value="AAA_2"/>
    <property type="match status" value="1"/>
</dbReference>
<dbReference type="SMART" id="SM00382">
    <property type="entry name" value="AAA"/>
    <property type="match status" value="1"/>
</dbReference>
<dbReference type="SMART" id="SM01086">
    <property type="entry name" value="ClpB_D2-small"/>
    <property type="match status" value="1"/>
</dbReference>
<dbReference type="SUPFAM" id="SSF52540">
    <property type="entry name" value="P-loop containing nucleoside triphosphate hydrolases"/>
    <property type="match status" value="1"/>
</dbReference>
<evidence type="ECO:0000255" key="1">
    <source>
        <dbReference type="HAMAP-Rule" id="MF_00249"/>
    </source>
</evidence>
<organism>
    <name type="scientific">Alcanivorax borkumensis (strain ATCC 700651 / DSM 11573 / NCIMB 13689 / SK2)</name>
    <dbReference type="NCBI Taxonomy" id="393595"/>
    <lineage>
        <taxon>Bacteria</taxon>
        <taxon>Pseudomonadati</taxon>
        <taxon>Pseudomonadota</taxon>
        <taxon>Gammaproteobacteria</taxon>
        <taxon>Oceanospirillales</taxon>
        <taxon>Alcanivoracaceae</taxon>
        <taxon>Alcanivorax</taxon>
    </lineage>
</organism>
<gene>
    <name evidence="1" type="primary">hslU</name>
    <name type="ordered locus">ABO_2245</name>
</gene>
<feature type="chain" id="PRO_1000189690" description="ATP-dependent protease ATPase subunit HslU">
    <location>
        <begin position="1"/>
        <end position="445"/>
    </location>
</feature>
<feature type="binding site" evidence="1">
    <location>
        <position position="18"/>
    </location>
    <ligand>
        <name>ATP</name>
        <dbReference type="ChEBI" id="CHEBI:30616"/>
    </ligand>
</feature>
<feature type="binding site" evidence="1">
    <location>
        <begin position="60"/>
        <end position="65"/>
    </location>
    <ligand>
        <name>ATP</name>
        <dbReference type="ChEBI" id="CHEBI:30616"/>
    </ligand>
</feature>
<feature type="binding site" evidence="1">
    <location>
        <position position="254"/>
    </location>
    <ligand>
        <name>ATP</name>
        <dbReference type="ChEBI" id="CHEBI:30616"/>
    </ligand>
</feature>
<feature type="binding site" evidence="1">
    <location>
        <position position="319"/>
    </location>
    <ligand>
        <name>ATP</name>
        <dbReference type="ChEBI" id="CHEBI:30616"/>
    </ligand>
</feature>
<feature type="binding site" evidence="1">
    <location>
        <position position="391"/>
    </location>
    <ligand>
        <name>ATP</name>
        <dbReference type="ChEBI" id="CHEBI:30616"/>
    </ligand>
</feature>
<sequence length="445" mass="49855">MASLTPKDIVSELNRHIVGQDAAKRAVALALRTRWRRMQLPEEMRAEVAPKNILMIGPTGVGKTEIARRLAKLADAPFIKVEATKFTEVGYVGRDVESIIRDLMEVAIKLLRDKEIARVGSQADDAAEERILDALLPPARTDDSSANTDNSTRQIFRKKLREGELDDKEIDVDVASNPAGIDIMAPPGMEEMTSQLQQMFSKMGNNQQRKSQKLKVREAYRLIRDEEAARFVNEDELKVQAIDAVENSGIVFIDEIDKVAKRGEGGGTDVSREGVQRDLLPLIEGSTVSTKYGMVKTDHILFIASGAFHLSRPSDLIPELQGRLPIRVELSPLSPDDFQRILTEPKCSLTEQYKALLETEGLNLEITDDCIRRIAEVAWQVNERTENIGARRLHTVLEKLLEEISFDADSLATQYHDKPLVLDAEAVDRYLGELADDEDLSRYIL</sequence>
<comment type="function">
    <text evidence="1">ATPase subunit of a proteasome-like degradation complex; this subunit has chaperone activity. The binding of ATP and its subsequent hydrolysis by HslU are essential for unfolding of protein substrates subsequently hydrolyzed by HslV. HslU recognizes the N-terminal part of its protein substrates and unfolds these before they are guided to HslV for hydrolysis.</text>
</comment>
<comment type="subunit">
    <text evidence="1">A double ring-shaped homohexamer of HslV is capped on each side by a ring-shaped HslU homohexamer. The assembly of the HslU/HslV complex is dependent on binding of ATP.</text>
</comment>
<comment type="subcellular location">
    <subcellularLocation>
        <location evidence="1">Cytoplasm</location>
    </subcellularLocation>
</comment>
<comment type="similarity">
    <text evidence="1">Belongs to the ClpX chaperone family. HslU subfamily.</text>
</comment>
<accession>Q0VMA5</accession>
<reference key="1">
    <citation type="journal article" date="2006" name="Nat. Biotechnol.">
        <title>Genome sequence of the ubiquitous hydrocarbon-degrading marine bacterium Alcanivorax borkumensis.</title>
        <authorList>
            <person name="Schneiker S."/>
            <person name="Martins dos Santos V.A.P."/>
            <person name="Bartels D."/>
            <person name="Bekel T."/>
            <person name="Brecht M."/>
            <person name="Buhrmester J."/>
            <person name="Chernikova T.N."/>
            <person name="Denaro R."/>
            <person name="Ferrer M."/>
            <person name="Gertler C."/>
            <person name="Goesmann A."/>
            <person name="Golyshina O.V."/>
            <person name="Kaminski F."/>
            <person name="Khachane A.N."/>
            <person name="Lang S."/>
            <person name="Linke B."/>
            <person name="McHardy A.C."/>
            <person name="Meyer F."/>
            <person name="Nechitaylo T."/>
            <person name="Puehler A."/>
            <person name="Regenhardt D."/>
            <person name="Rupp O."/>
            <person name="Sabirova J.S."/>
            <person name="Selbitschka W."/>
            <person name="Yakimov M.M."/>
            <person name="Timmis K.N."/>
            <person name="Vorhoelter F.-J."/>
            <person name="Weidner S."/>
            <person name="Kaiser O."/>
            <person name="Golyshin P.N."/>
        </authorList>
    </citation>
    <scope>NUCLEOTIDE SEQUENCE [LARGE SCALE GENOMIC DNA]</scope>
    <source>
        <strain>ATCC 700651 / DSM 11573 / NCIMB 13689 / SK2</strain>
    </source>
</reference>
<name>HSLU_ALCBS</name>